<protein>
    <recommendedName>
        <fullName evidence="1">Gamma-glutamyl phosphate reductase</fullName>
        <shortName evidence="1">GPR</shortName>
        <ecNumber evidence="1">1.2.1.41</ecNumber>
    </recommendedName>
    <alternativeName>
        <fullName evidence="1">Glutamate-5-semialdehyde dehydrogenase</fullName>
    </alternativeName>
    <alternativeName>
        <fullName evidence="1">Glutamyl-gamma-semialdehyde dehydrogenase</fullName>
        <shortName evidence="1">GSA dehydrogenase</shortName>
    </alternativeName>
</protein>
<keyword id="KW-0028">Amino-acid biosynthesis</keyword>
<keyword id="KW-0963">Cytoplasm</keyword>
<keyword id="KW-0521">NADP</keyword>
<keyword id="KW-0560">Oxidoreductase</keyword>
<keyword id="KW-0641">Proline biosynthesis</keyword>
<keyword id="KW-1185">Reference proteome</keyword>
<comment type="function">
    <text evidence="1">Catalyzes the NADPH-dependent reduction of L-glutamate 5-phosphate into L-glutamate 5-semialdehyde and phosphate. The product spontaneously undergoes cyclization to form 1-pyrroline-5-carboxylate.</text>
</comment>
<comment type="catalytic activity">
    <reaction evidence="1">
        <text>L-glutamate 5-semialdehyde + phosphate + NADP(+) = L-glutamyl 5-phosphate + NADPH + H(+)</text>
        <dbReference type="Rhea" id="RHEA:19541"/>
        <dbReference type="ChEBI" id="CHEBI:15378"/>
        <dbReference type="ChEBI" id="CHEBI:43474"/>
        <dbReference type="ChEBI" id="CHEBI:57783"/>
        <dbReference type="ChEBI" id="CHEBI:58066"/>
        <dbReference type="ChEBI" id="CHEBI:58274"/>
        <dbReference type="ChEBI" id="CHEBI:58349"/>
        <dbReference type="EC" id="1.2.1.41"/>
    </reaction>
</comment>
<comment type="pathway">
    <text evidence="1">Amino-acid biosynthesis; L-proline biosynthesis; L-glutamate 5-semialdehyde from L-glutamate: step 2/2.</text>
</comment>
<comment type="subcellular location">
    <subcellularLocation>
        <location evidence="1">Cytoplasm</location>
    </subcellularLocation>
</comment>
<comment type="similarity">
    <text evidence="1">Belongs to the gamma-glutamyl phosphate reductase family.</text>
</comment>
<accession>A6Q3B4</accession>
<evidence type="ECO:0000255" key="1">
    <source>
        <dbReference type="HAMAP-Rule" id="MF_00412"/>
    </source>
</evidence>
<feature type="chain" id="PRO_1000049972" description="Gamma-glutamyl phosphate reductase">
    <location>
        <begin position="1"/>
        <end position="412"/>
    </location>
</feature>
<proteinExistence type="inferred from homology"/>
<reference key="1">
    <citation type="journal article" date="2007" name="Proc. Natl. Acad. Sci. U.S.A.">
        <title>Deep-sea vent epsilon-proteobacterial genomes provide insights into emergence of pathogens.</title>
        <authorList>
            <person name="Nakagawa S."/>
            <person name="Takaki Y."/>
            <person name="Shimamura S."/>
            <person name="Reysenbach A.-L."/>
            <person name="Takai K."/>
            <person name="Horikoshi K."/>
        </authorList>
    </citation>
    <scope>NUCLEOTIDE SEQUENCE [LARGE SCALE GENOMIC DNA]</scope>
    <source>
        <strain>SB155-2</strain>
    </source>
</reference>
<organism>
    <name type="scientific">Nitratiruptor sp. (strain SB155-2)</name>
    <dbReference type="NCBI Taxonomy" id="387092"/>
    <lineage>
        <taxon>Bacteria</taxon>
        <taxon>Pseudomonadati</taxon>
        <taxon>Campylobacterota</taxon>
        <taxon>Epsilonproteobacteria</taxon>
        <taxon>Nautiliales</taxon>
        <taxon>Nitratiruptoraceae</taxon>
        <taxon>Nitratiruptor</taxon>
    </lineage>
</organism>
<gene>
    <name evidence="1" type="primary">proA</name>
    <name type="ordered locus">NIS_0861</name>
</gene>
<dbReference type="EC" id="1.2.1.41" evidence="1"/>
<dbReference type="EMBL" id="AP009178">
    <property type="protein sequence ID" value="BAF69973.1"/>
    <property type="molecule type" value="Genomic_DNA"/>
</dbReference>
<dbReference type="RefSeq" id="WP_012082236.1">
    <property type="nucleotide sequence ID" value="NC_009662.1"/>
</dbReference>
<dbReference type="SMR" id="A6Q3B4"/>
<dbReference type="FunCoup" id="A6Q3B4">
    <property type="interactions" value="368"/>
</dbReference>
<dbReference type="STRING" id="387092.NIS_0861"/>
<dbReference type="KEGG" id="nis:NIS_0861"/>
<dbReference type="eggNOG" id="COG0014">
    <property type="taxonomic scope" value="Bacteria"/>
</dbReference>
<dbReference type="HOGENOM" id="CLU_030231_0_0_7"/>
<dbReference type="InParanoid" id="A6Q3B4"/>
<dbReference type="OrthoDB" id="9809970at2"/>
<dbReference type="UniPathway" id="UPA00098">
    <property type="reaction ID" value="UER00360"/>
</dbReference>
<dbReference type="Proteomes" id="UP000001118">
    <property type="component" value="Chromosome"/>
</dbReference>
<dbReference type="GO" id="GO:0005737">
    <property type="term" value="C:cytoplasm"/>
    <property type="evidence" value="ECO:0007669"/>
    <property type="project" value="UniProtKB-SubCell"/>
</dbReference>
<dbReference type="GO" id="GO:0004350">
    <property type="term" value="F:glutamate-5-semialdehyde dehydrogenase activity"/>
    <property type="evidence" value="ECO:0007669"/>
    <property type="project" value="UniProtKB-UniRule"/>
</dbReference>
<dbReference type="GO" id="GO:0050661">
    <property type="term" value="F:NADP binding"/>
    <property type="evidence" value="ECO:0007669"/>
    <property type="project" value="InterPro"/>
</dbReference>
<dbReference type="GO" id="GO:0055129">
    <property type="term" value="P:L-proline biosynthetic process"/>
    <property type="evidence" value="ECO:0007669"/>
    <property type="project" value="UniProtKB-UniRule"/>
</dbReference>
<dbReference type="CDD" id="cd07079">
    <property type="entry name" value="ALDH_F18-19_ProA-GPR"/>
    <property type="match status" value="1"/>
</dbReference>
<dbReference type="FunFam" id="3.40.309.10:FF:000006">
    <property type="entry name" value="Gamma-glutamyl phosphate reductase"/>
    <property type="match status" value="1"/>
</dbReference>
<dbReference type="Gene3D" id="3.40.605.10">
    <property type="entry name" value="Aldehyde Dehydrogenase, Chain A, domain 1"/>
    <property type="match status" value="1"/>
</dbReference>
<dbReference type="Gene3D" id="3.40.309.10">
    <property type="entry name" value="Aldehyde Dehydrogenase, Chain A, domain 2"/>
    <property type="match status" value="1"/>
</dbReference>
<dbReference type="HAMAP" id="MF_00412">
    <property type="entry name" value="ProA"/>
    <property type="match status" value="1"/>
</dbReference>
<dbReference type="InterPro" id="IPR016161">
    <property type="entry name" value="Ald_DH/histidinol_DH"/>
</dbReference>
<dbReference type="InterPro" id="IPR016163">
    <property type="entry name" value="Ald_DH_C"/>
</dbReference>
<dbReference type="InterPro" id="IPR016162">
    <property type="entry name" value="Ald_DH_N"/>
</dbReference>
<dbReference type="InterPro" id="IPR015590">
    <property type="entry name" value="Aldehyde_DH_dom"/>
</dbReference>
<dbReference type="InterPro" id="IPR020593">
    <property type="entry name" value="G-glutamylP_reductase_CS"/>
</dbReference>
<dbReference type="InterPro" id="IPR012134">
    <property type="entry name" value="Glu-5-SA_DH"/>
</dbReference>
<dbReference type="InterPro" id="IPR000965">
    <property type="entry name" value="GPR_dom"/>
</dbReference>
<dbReference type="NCBIfam" id="NF001221">
    <property type="entry name" value="PRK00197.1"/>
    <property type="match status" value="1"/>
</dbReference>
<dbReference type="NCBIfam" id="TIGR00407">
    <property type="entry name" value="proA"/>
    <property type="match status" value="1"/>
</dbReference>
<dbReference type="PANTHER" id="PTHR11063:SF8">
    <property type="entry name" value="DELTA-1-PYRROLINE-5-CARBOXYLATE SYNTHASE"/>
    <property type="match status" value="1"/>
</dbReference>
<dbReference type="PANTHER" id="PTHR11063">
    <property type="entry name" value="GLUTAMATE SEMIALDEHYDE DEHYDROGENASE"/>
    <property type="match status" value="1"/>
</dbReference>
<dbReference type="Pfam" id="PF00171">
    <property type="entry name" value="Aldedh"/>
    <property type="match status" value="2"/>
</dbReference>
<dbReference type="PIRSF" id="PIRSF000151">
    <property type="entry name" value="GPR"/>
    <property type="match status" value="1"/>
</dbReference>
<dbReference type="SUPFAM" id="SSF53720">
    <property type="entry name" value="ALDH-like"/>
    <property type="match status" value="1"/>
</dbReference>
<dbReference type="PROSITE" id="PS01223">
    <property type="entry name" value="PROA"/>
    <property type="match status" value="1"/>
</dbReference>
<sequence length="412" mass="45471">MEHFLKKAKASASELLRIDGAKKKSVLLQIADDIEKNSNKILAANEKDMALAREMNLSSALIDRLFLDEKRVRSMAESVREIAMLKDPVGRVLDGWVLDNGLRIEKVSIPIGVIGIIYESRPNVTSDAAALCFKSGNVSILKGGKEAKNSNEAIAETIQAVLEKNDLPKELVSLLPDYSREGVEKLIKMDKYVDLIIPRGGEGLIRYVSENATVPVVKHDKGLCHTYIDKDADFDKAVAIAVNAKVQRPGVCNAMETLLVDYAIKDEILLKLYEAFKPHMTTLKGCALTKEVLPDIETASEEDFHTEYLENILSIKVVDGVEEAIEHIRKYGSGHSEAIVTENYTTAEKFMNEVDAACVYVNASTRFTDGGVFGFGAEVGISTNKLHARGPMGINDLTTYKYKIYGEGQIRQ</sequence>
<name>PROA_NITSB</name>